<sequence>MSPEVTCPRRGHLPRFHPRTWVEPVVASSQVAASLYDAGLLLVVKASYGTGGSSNHSASPSPRGALEDQQQRAISNFYIIYNLVVGLSPLLSAYGLGWLSDRYHRKISICMSLLGFLLSRLGLLLKVLLDWPVEVLYGAAALNGLFGGFSAFWSGVMALGSLGSSEGRRSVRLILIDLMLGLAGFCGSMASGHLFKQMAGHSGQGLILTACSVSCASFALLYSLLVLKVPESVAKPSQELPAVDTVSGTVGTYRTLDPDQLDQQYAVGHPPSPGKAKPHKTTIALLFVGAIIYDLAVVGTVDVIPLFVLREPLGWNQVQVGYGMAAGYTIFITSFLGVLVFSRCFRDTTMIMIGMVSFGSGALLLAFVKETYMFYIARAVMLFALIPVTTIRSAMSKLIKGSSYGKVFVILQLSLALTGVVTSTLYNKIYQLTMDMFVGSCFALSSFLSFLAIIPISIVAYKQVPLSPYGDIIEK</sequence>
<comment type="function">
    <text evidence="5 6 10">Proton-coupled transporter that delivers pathogen-associated or danger-associated molecular patterns to cytosolic pattern recognition receptors as part of the innate immune response to microbes or tissue injury (PubMed:28539433, PubMed:34235268). Has selectivity toward muropeptides that contain the amino acid diaminopimelic acid (DAP-type peptidoglycan muropeptides) including Tri-DAP and tracheal toxin (TCT), common in Gram-negative bacteria and Gram-positive bacilli. In the context of immune recognition of skin microbiota, shuttles bacterial muropeptides across the endolysosomal membranes into the cytosol for recognition by NOD1, triggering MYD88-dependent secretion of IL1A and neutrophil recruitment in a pyroptosis-type inflammatory process (PubMed:28539433). To a lesser extent and redundantly, transports muramyl dipeptides derived from most bacterial proteoglycans, eliciting NOD2 receptor activation and downstream inflammatory responses (PubMed:28539433). Postulated to function as a dominant importer of cyclic GMP-AMP dinucleotides (cGAMPs) in monocyte and macrophage cell lineages. Selectively imports cGAMPs derived from pathogenic bacteria such as 3'3'-cGAMP thus providing for differential immune recognition of pathogenic versus commensal bacteria. During tumorigenesis may transport extracellular tumor-derived 2'3'-cGAMP across the plasma membrane of M1-polarized macrophages to activate the anti-tumoral stimulator of interferon genes (STING) pathway (PubMed:34235268). The transport mechanism, its electrogenicity and stoichiometry remain to be elucidated (Probable).</text>
</comment>
<comment type="catalytic activity">
    <reaction evidence="5">
        <text>N-acetyl-beta-D-glucosaminyl-(1-&gt;4)-1,6-anhydro-N-acetyl-beta-D-muramoyl-L-alanyl-gamma-D-glutamyl-meso-2,6-diaminopimeloyl-D-alanine(out) + n H(+)(out) = N-acetyl-beta-D-glucosaminyl-(1-&gt;4)-1,6-anhydro-N-acetyl-beta-D-muramoyl-L-alanyl-gamma-D-glutamyl-meso-2,6-diaminopimeloyl-D-alanine(in) + n H(+)(in)</text>
        <dbReference type="Rhea" id="RHEA:76355"/>
        <dbReference type="ChEBI" id="CHEBI:15378"/>
        <dbReference type="ChEBI" id="CHEBI:195208"/>
    </reaction>
    <physiologicalReaction direction="left-to-right" evidence="11">
        <dbReference type="Rhea" id="RHEA:76356"/>
    </physiologicalReaction>
</comment>
<comment type="catalytic activity">
    <reaction evidence="2">
        <text>L-alanyl-gamma-D-glutamyl-meso-2,6-diaminopimelate(out) + n H(+)(out) = L-alanyl-gamma-D-glutamyl-meso-2,6-diaminopimelate(in) + n H(+)(in)</text>
        <dbReference type="Rhea" id="RHEA:64412"/>
        <dbReference type="ChEBI" id="CHEBI:15378"/>
        <dbReference type="ChEBI" id="CHEBI:61401"/>
    </reaction>
    <physiologicalReaction direction="left-to-right" evidence="2">
        <dbReference type="Rhea" id="RHEA:64413"/>
    </physiologicalReaction>
</comment>
<comment type="catalytic activity">
    <reaction evidence="5">
        <text>N-acetyl-D-muramoyl-L-alanyl-D-isoglutamine(out) + n H(+)(out) = N-acetyl-D-muramoyl-L-alanyl-D-isoglutamine(in) + n H(+)(in)</text>
        <dbReference type="Rhea" id="RHEA:76371"/>
        <dbReference type="ChEBI" id="CHEBI:15378"/>
        <dbReference type="ChEBI" id="CHEBI:155830"/>
    </reaction>
    <physiologicalReaction direction="left-to-right" evidence="11">
        <dbReference type="Rhea" id="RHEA:76372"/>
    </physiologicalReaction>
</comment>
<comment type="catalytic activity">
    <reaction evidence="6">
        <text>2',3'-cGAMP(out) + n H(+)(out) = 2',3'-cGAMP(in) + n H(+)(in)</text>
        <dbReference type="Rhea" id="RHEA:76411"/>
        <dbReference type="ChEBI" id="CHEBI:15378"/>
        <dbReference type="ChEBI" id="CHEBI:143093"/>
    </reaction>
    <physiologicalReaction direction="left-to-right" evidence="12">
        <dbReference type="Rhea" id="RHEA:76412"/>
    </physiologicalReaction>
</comment>
<comment type="catalytic activity">
    <reaction evidence="6">
        <text>3',3'-cGAMP(out) + n H(+)(out) = 3',3'-cGAMP(in) + n H(+)(in)</text>
        <dbReference type="Rhea" id="RHEA:76415"/>
        <dbReference type="ChEBI" id="CHEBI:15378"/>
        <dbReference type="ChEBI" id="CHEBI:71501"/>
    </reaction>
    <physiologicalReaction direction="left-to-right" evidence="12">
        <dbReference type="Rhea" id="RHEA:76416"/>
    </physiologicalReaction>
</comment>
<comment type="subcellular location">
    <subcellularLocation>
        <location evidence="5">Endosome membrane</location>
        <topology evidence="3">Multi-pass membrane protein</topology>
    </subcellularLocation>
    <subcellularLocation>
        <location evidence="6">Cell membrane</location>
        <topology>Multi-pass membrane protein</topology>
    </subcellularLocation>
    <text evidence="5">Localizes in acidic vesicles likely late endosomes and/or endolysosomes.</text>
</comment>
<comment type="tissue specificity">
    <text evidence="4 6">Strongly expressed in the adult thymus. Expressed in spleen, lymph nodes, thymus, PBL, bone marrow and fetal liver. Expressed in monocytes and pre-dendridic cells.</text>
</comment>
<comment type="induction">
    <text evidence="7">Up-regulated in keratinocytes upon differentiation.</text>
</comment>
<comment type="PTM">
    <text evidence="1">Glycosylated.</text>
</comment>
<comment type="similarity">
    <text evidence="10">Belongs to the major facilitator superfamily. SLC46A family.</text>
</comment>
<proteinExistence type="evidence at protein level"/>
<protein>
    <recommendedName>
        <fullName>Solute carrier family 46 member 2</fullName>
    </recommendedName>
    <alternativeName>
        <fullName>Thymic stromal cotransporter homolog</fullName>
    </alternativeName>
</protein>
<keyword id="KW-1003">Cell membrane</keyword>
<keyword id="KW-0967">Endosome</keyword>
<keyword id="KW-0325">Glycoprotein</keyword>
<keyword id="KW-0391">Immunity</keyword>
<keyword id="KW-0399">Innate immunity</keyword>
<keyword id="KW-0472">Membrane</keyword>
<keyword id="KW-1267">Proteomics identification</keyword>
<keyword id="KW-1185">Reference proteome</keyword>
<keyword id="KW-0812">Transmembrane</keyword>
<keyword id="KW-1133">Transmembrane helix</keyword>
<keyword id="KW-0813">Transport</keyword>
<evidence type="ECO:0000250" key="1"/>
<evidence type="ECO:0000250" key="2">
    <source>
        <dbReference type="UniProtKB" id="Q8CA03"/>
    </source>
</evidence>
<evidence type="ECO:0000255" key="3"/>
<evidence type="ECO:0000269" key="4">
    <source>
    </source>
</evidence>
<evidence type="ECO:0000269" key="5">
    <source>
    </source>
</evidence>
<evidence type="ECO:0000269" key="6">
    <source>
    </source>
</evidence>
<evidence type="ECO:0000269" key="7">
    <source>
    </source>
</evidence>
<evidence type="ECO:0000303" key="8">
    <source>
    </source>
</evidence>
<evidence type="ECO:0000303" key="9">
    <source>
    </source>
</evidence>
<evidence type="ECO:0000305" key="10"/>
<evidence type="ECO:0000305" key="11">
    <source>
    </source>
</evidence>
<evidence type="ECO:0000305" key="12">
    <source>
    </source>
</evidence>
<gene>
    <name evidence="9" type="primary">SLC46A2</name>
    <name evidence="8" type="synonym">TSCOT</name>
</gene>
<dbReference type="EMBL" id="AF242557">
    <property type="protein sequence ID" value="AAK28343.1"/>
    <property type="molecule type" value="mRNA"/>
</dbReference>
<dbReference type="EMBL" id="AK055571">
    <property type="protein sequence ID" value="BAB70960.1"/>
    <property type="molecule type" value="mRNA"/>
</dbReference>
<dbReference type="EMBL" id="AK314414">
    <property type="protein sequence ID" value="BAG37035.1"/>
    <property type="molecule type" value="mRNA"/>
</dbReference>
<dbReference type="EMBL" id="AL139041">
    <property type="status" value="NOT_ANNOTATED_CDS"/>
    <property type="molecule type" value="Genomic_DNA"/>
</dbReference>
<dbReference type="EMBL" id="CH878453">
    <property type="protein sequence ID" value="EAW50550.1"/>
    <property type="molecule type" value="Genomic_DNA"/>
</dbReference>
<dbReference type="EMBL" id="BC048285">
    <property type="protein sequence ID" value="AAH48285.1"/>
    <property type="molecule type" value="mRNA"/>
</dbReference>
<dbReference type="CCDS" id="CCDS6786.1"/>
<dbReference type="RefSeq" id="NP_149040.3">
    <property type="nucleotide sequence ID" value="NM_033051.3"/>
</dbReference>
<dbReference type="SMR" id="Q9BY10"/>
<dbReference type="FunCoup" id="Q9BY10">
    <property type="interactions" value="76"/>
</dbReference>
<dbReference type="STRING" id="9606.ENSP00000363345"/>
<dbReference type="TCDB" id="2.A.1.50.2">
    <property type="family name" value="the major facilitator superfamily (mfs)"/>
</dbReference>
<dbReference type="GlyCosmos" id="Q9BY10">
    <property type="glycosylation" value="1 site, No reported glycans"/>
</dbReference>
<dbReference type="GlyGen" id="Q9BY10">
    <property type="glycosylation" value="1 site"/>
</dbReference>
<dbReference type="iPTMnet" id="Q9BY10"/>
<dbReference type="PhosphoSitePlus" id="Q9BY10"/>
<dbReference type="BioMuta" id="SLC46A2"/>
<dbReference type="DMDM" id="83287921"/>
<dbReference type="MassIVE" id="Q9BY10"/>
<dbReference type="PaxDb" id="9606-ENSP00000363345"/>
<dbReference type="PeptideAtlas" id="Q9BY10"/>
<dbReference type="Antibodypedia" id="29714">
    <property type="antibodies" value="56 antibodies from 18 providers"/>
</dbReference>
<dbReference type="DNASU" id="57864"/>
<dbReference type="Ensembl" id="ENST00000374228.5">
    <property type="protein sequence ID" value="ENSP00000363345.4"/>
    <property type="gene ID" value="ENSG00000119457.8"/>
</dbReference>
<dbReference type="GeneID" id="57864"/>
<dbReference type="KEGG" id="hsa:57864"/>
<dbReference type="MANE-Select" id="ENST00000374228.5">
    <property type="protein sequence ID" value="ENSP00000363345.4"/>
    <property type="RefSeq nucleotide sequence ID" value="NM_033051.4"/>
    <property type="RefSeq protein sequence ID" value="NP_149040.3"/>
</dbReference>
<dbReference type="UCSC" id="uc004bgk.3">
    <property type="organism name" value="human"/>
</dbReference>
<dbReference type="AGR" id="HGNC:16055"/>
<dbReference type="CTD" id="57864"/>
<dbReference type="DisGeNET" id="57864"/>
<dbReference type="GeneCards" id="SLC46A2"/>
<dbReference type="HGNC" id="HGNC:16055">
    <property type="gene designation" value="SLC46A2"/>
</dbReference>
<dbReference type="HPA" id="ENSG00000119457">
    <property type="expression patterns" value="Tissue enhanced (cervix, lung, lymphoid tissue, skin)"/>
</dbReference>
<dbReference type="MIM" id="608956">
    <property type="type" value="gene"/>
</dbReference>
<dbReference type="neXtProt" id="NX_Q9BY10"/>
<dbReference type="OpenTargets" id="ENSG00000119457"/>
<dbReference type="PharmGKB" id="PA162403790"/>
<dbReference type="VEuPathDB" id="HostDB:ENSG00000119457"/>
<dbReference type="eggNOG" id="KOG2816">
    <property type="taxonomic scope" value="Eukaryota"/>
</dbReference>
<dbReference type="GeneTree" id="ENSGT00950000183096"/>
<dbReference type="HOGENOM" id="CLU_028365_3_0_1"/>
<dbReference type="InParanoid" id="Q9BY10"/>
<dbReference type="OMA" id="AYWSGVM"/>
<dbReference type="OrthoDB" id="430300at2759"/>
<dbReference type="PAN-GO" id="Q9BY10">
    <property type="GO annotations" value="3 GO annotations based on evolutionary models"/>
</dbReference>
<dbReference type="PhylomeDB" id="Q9BY10"/>
<dbReference type="TreeFam" id="TF315701"/>
<dbReference type="PathwayCommons" id="Q9BY10"/>
<dbReference type="BioGRID-ORCS" id="57864">
    <property type="hits" value="10 hits in 1142 CRISPR screens"/>
</dbReference>
<dbReference type="GenomeRNAi" id="57864"/>
<dbReference type="Pharos" id="Q9BY10">
    <property type="development level" value="Tdark"/>
</dbReference>
<dbReference type="PRO" id="PR:Q9BY10"/>
<dbReference type="Proteomes" id="UP000005640">
    <property type="component" value="Chromosome 9"/>
</dbReference>
<dbReference type="RNAct" id="Q9BY10">
    <property type="molecule type" value="protein"/>
</dbReference>
<dbReference type="Bgee" id="ENSG00000119457">
    <property type="expression patterns" value="Expressed in upper arm skin and 92 other cell types or tissues"/>
</dbReference>
<dbReference type="ExpressionAtlas" id="Q9BY10">
    <property type="expression patterns" value="baseline and differential"/>
</dbReference>
<dbReference type="GO" id="GO:0009986">
    <property type="term" value="C:cell surface"/>
    <property type="evidence" value="ECO:0007669"/>
    <property type="project" value="Ensembl"/>
</dbReference>
<dbReference type="GO" id="GO:0010008">
    <property type="term" value="C:endosome membrane"/>
    <property type="evidence" value="ECO:0007669"/>
    <property type="project" value="UniProtKB-SubCell"/>
</dbReference>
<dbReference type="GO" id="GO:0016020">
    <property type="term" value="C:membrane"/>
    <property type="evidence" value="ECO:0000318"/>
    <property type="project" value="GO_Central"/>
</dbReference>
<dbReference type="GO" id="GO:0005886">
    <property type="term" value="C:plasma membrane"/>
    <property type="evidence" value="ECO:0000314"/>
    <property type="project" value="UniProtKB"/>
</dbReference>
<dbReference type="GO" id="GO:0140360">
    <property type="term" value="F:cyclic-GMP-AMP transmembrane transporter activity"/>
    <property type="evidence" value="ECO:0000314"/>
    <property type="project" value="UniProtKB"/>
</dbReference>
<dbReference type="GO" id="GO:0015293">
    <property type="term" value="F:symporter activity"/>
    <property type="evidence" value="ECO:0000303"/>
    <property type="project" value="UniProtKB"/>
</dbReference>
<dbReference type="GO" id="GO:0022857">
    <property type="term" value="F:transmembrane transporter activity"/>
    <property type="evidence" value="ECO:0000318"/>
    <property type="project" value="GO_Central"/>
</dbReference>
<dbReference type="GO" id="GO:0140361">
    <property type="term" value="P:cyclic-GMP-AMP transmembrane import across plasma membrane"/>
    <property type="evidence" value="ECO:0000314"/>
    <property type="project" value="UniProtKB"/>
</dbReference>
<dbReference type="GO" id="GO:0045087">
    <property type="term" value="P:innate immune response"/>
    <property type="evidence" value="ECO:0007669"/>
    <property type="project" value="UniProtKB-KW"/>
</dbReference>
<dbReference type="GO" id="GO:0070233">
    <property type="term" value="P:negative regulation of T cell apoptotic process"/>
    <property type="evidence" value="ECO:0007669"/>
    <property type="project" value="Ensembl"/>
</dbReference>
<dbReference type="GO" id="GO:0070430">
    <property type="term" value="P:positive regulation of nucleotide-binding oligomerization domain containing 1 signaling pathway"/>
    <property type="evidence" value="ECO:0000315"/>
    <property type="project" value="FlyBase"/>
</dbReference>
<dbReference type="GO" id="GO:0045580">
    <property type="term" value="P:regulation of T cell differentiation"/>
    <property type="evidence" value="ECO:0007669"/>
    <property type="project" value="Ensembl"/>
</dbReference>
<dbReference type="GO" id="GO:0043029">
    <property type="term" value="P:T cell homeostasis"/>
    <property type="evidence" value="ECO:0007669"/>
    <property type="project" value="Ensembl"/>
</dbReference>
<dbReference type="GO" id="GO:0048538">
    <property type="term" value="P:thymus development"/>
    <property type="evidence" value="ECO:0007669"/>
    <property type="project" value="Ensembl"/>
</dbReference>
<dbReference type="GO" id="GO:0055085">
    <property type="term" value="P:transmembrane transport"/>
    <property type="evidence" value="ECO:0000318"/>
    <property type="project" value="GO_Central"/>
</dbReference>
<dbReference type="CDD" id="cd17450">
    <property type="entry name" value="MFS_SLC46A2_TSCOT"/>
    <property type="match status" value="1"/>
</dbReference>
<dbReference type="Gene3D" id="1.20.1250.20">
    <property type="entry name" value="MFS general substrate transporter like domains"/>
    <property type="match status" value="1"/>
</dbReference>
<dbReference type="InterPro" id="IPR011701">
    <property type="entry name" value="MFS"/>
</dbReference>
<dbReference type="InterPro" id="IPR036259">
    <property type="entry name" value="MFS_trans_sf"/>
</dbReference>
<dbReference type="InterPro" id="IPR001958">
    <property type="entry name" value="Tet-R_TetA/multi-R_MdtG-like"/>
</dbReference>
<dbReference type="PANTHER" id="PTHR23507:SF3">
    <property type="entry name" value="THYMIC STROMAL COTRANSPORTER HOMOLOG"/>
    <property type="match status" value="1"/>
</dbReference>
<dbReference type="PANTHER" id="PTHR23507">
    <property type="entry name" value="ZGC:174356"/>
    <property type="match status" value="1"/>
</dbReference>
<dbReference type="Pfam" id="PF07690">
    <property type="entry name" value="MFS_1"/>
    <property type="match status" value="1"/>
</dbReference>
<dbReference type="PRINTS" id="PR01035">
    <property type="entry name" value="TCRTETA"/>
</dbReference>
<dbReference type="SUPFAM" id="SSF103473">
    <property type="entry name" value="MFS general substrate transporter"/>
    <property type="match status" value="1"/>
</dbReference>
<name>S46A2_HUMAN</name>
<accession>Q9BY10</accession>
<accession>B1ALK1</accession>
<accession>Q86VT0</accession>
<accession>Q96NE2</accession>
<feature type="chain" id="PRO_0000065659" description="Solute carrier family 46 member 2">
    <location>
        <begin position="1"/>
        <end position="475"/>
    </location>
</feature>
<feature type="topological domain" description="Cytoplasmic" evidence="3">
    <location>
        <begin position="1"/>
        <end position="23"/>
    </location>
</feature>
<feature type="transmembrane region" description="Helical; Name=1" evidence="3">
    <location>
        <begin position="24"/>
        <end position="44"/>
    </location>
</feature>
<feature type="topological domain" description="Extracellular" evidence="3">
    <location>
        <begin position="45"/>
        <end position="78"/>
    </location>
</feature>
<feature type="transmembrane region" description="Helical; Name=2" evidence="3">
    <location>
        <begin position="79"/>
        <end position="99"/>
    </location>
</feature>
<feature type="topological domain" description="Cytoplasmic" evidence="3">
    <location>
        <begin position="100"/>
        <end position="108"/>
    </location>
</feature>
<feature type="transmembrane region" description="Helical; Name=3" evidence="3">
    <location>
        <begin position="109"/>
        <end position="129"/>
    </location>
</feature>
<feature type="topological domain" description="Extracellular" evidence="3">
    <location>
        <begin position="130"/>
        <end position="138"/>
    </location>
</feature>
<feature type="transmembrane region" description="Helical; Name=4" evidence="3">
    <location>
        <begin position="139"/>
        <end position="159"/>
    </location>
</feature>
<feature type="topological domain" description="Cytoplasmic" evidence="3">
    <location>
        <begin position="160"/>
        <end position="172"/>
    </location>
</feature>
<feature type="transmembrane region" description="Helical; Name=5" evidence="3">
    <location>
        <begin position="173"/>
        <end position="193"/>
    </location>
</feature>
<feature type="topological domain" description="Extracellular" evidence="3">
    <location>
        <begin position="194"/>
        <end position="205"/>
    </location>
</feature>
<feature type="transmembrane region" description="Helical; Name=6" evidence="3">
    <location>
        <begin position="206"/>
        <end position="226"/>
    </location>
</feature>
<feature type="topological domain" description="Cytoplasmic" evidence="3">
    <location>
        <begin position="227"/>
        <end position="282"/>
    </location>
</feature>
<feature type="transmembrane region" description="Helical; Name=7" evidence="3">
    <location>
        <begin position="283"/>
        <end position="303"/>
    </location>
</feature>
<feature type="topological domain" description="Extracellular" evidence="3">
    <location>
        <begin position="304"/>
        <end position="320"/>
    </location>
</feature>
<feature type="transmembrane region" description="Helical; Name=8" evidence="3">
    <location>
        <begin position="321"/>
        <end position="341"/>
    </location>
</feature>
<feature type="topological domain" description="Cytoplasmic" evidence="3">
    <location>
        <begin position="342"/>
        <end position="347"/>
    </location>
</feature>
<feature type="transmembrane region" description="Helical; Name=9" evidence="3">
    <location>
        <begin position="348"/>
        <end position="368"/>
    </location>
</feature>
<feature type="topological domain" description="Extracellular" evidence="3">
    <location>
        <begin position="369"/>
        <end position="370"/>
    </location>
</feature>
<feature type="transmembrane region" description="Helical; Name=10" evidence="3">
    <location>
        <begin position="371"/>
        <end position="391"/>
    </location>
</feature>
<feature type="topological domain" description="Cytoplasmic" evidence="3">
    <location>
        <begin position="392"/>
        <end position="406"/>
    </location>
</feature>
<feature type="transmembrane region" description="Helical; Name=11" evidence="3">
    <location>
        <begin position="407"/>
        <end position="427"/>
    </location>
</feature>
<feature type="topological domain" description="Extracellular" evidence="3">
    <location>
        <begin position="428"/>
        <end position="435"/>
    </location>
</feature>
<feature type="transmembrane region" description="Helical; Name=12" evidence="3">
    <location>
        <begin position="436"/>
        <end position="456"/>
    </location>
</feature>
<feature type="topological domain" description="Cytoplasmic" evidence="3">
    <location>
        <begin position="457"/>
        <end position="475"/>
    </location>
</feature>
<feature type="glycosylation site" description="N-linked (GlcNAc...) asparagine" evidence="3">
    <location>
        <position position="55"/>
    </location>
</feature>
<feature type="sequence variant" id="VAR_021050" description="In dbSNP:rs16917454.">
    <original>A</original>
    <variation>V</variation>
    <location>
        <position position="366"/>
    </location>
</feature>
<feature type="sequence conflict" description="In Ref. 5; AAH48285." evidence="10" ref="5">
    <original>V</original>
    <variation>M</variation>
    <location>
        <position position="26"/>
    </location>
</feature>
<feature type="sequence conflict" description="In Ref. 2; BAB70960." evidence="10" ref="2">
    <original>V</original>
    <variation>A</variation>
    <location>
        <position position="380"/>
    </location>
</feature>
<reference key="1">
    <citation type="journal article" date="2000" name="Biochim. Biophys. Acta">
        <title>Characterization of the mouse gene, human promoter and human cDNA of TSCOT reveals strong interspecies homology.</title>
        <authorList>
            <person name="Chen C."/>
            <person name="Kim M.G."/>
            <person name="Lyu M.S."/>
            <person name="Kozak C.A."/>
            <person name="Schwartz R.H."/>
            <person name="Flomerfelt F.A."/>
        </authorList>
    </citation>
    <scope>NUCLEOTIDE SEQUENCE [MRNA]</scope>
    <scope>TISSUE SPECIFICITY</scope>
    <source>
        <tissue>Thymus</tissue>
    </source>
</reference>
<reference key="2">
    <citation type="journal article" date="2004" name="Nat. Genet.">
        <title>Complete sequencing and characterization of 21,243 full-length human cDNAs.</title>
        <authorList>
            <person name="Ota T."/>
            <person name="Suzuki Y."/>
            <person name="Nishikawa T."/>
            <person name="Otsuki T."/>
            <person name="Sugiyama T."/>
            <person name="Irie R."/>
            <person name="Wakamatsu A."/>
            <person name="Hayashi K."/>
            <person name="Sato H."/>
            <person name="Nagai K."/>
            <person name="Kimura K."/>
            <person name="Makita H."/>
            <person name="Sekine M."/>
            <person name="Obayashi M."/>
            <person name="Nishi T."/>
            <person name="Shibahara T."/>
            <person name="Tanaka T."/>
            <person name="Ishii S."/>
            <person name="Yamamoto J."/>
            <person name="Saito K."/>
            <person name="Kawai Y."/>
            <person name="Isono Y."/>
            <person name="Nakamura Y."/>
            <person name="Nagahari K."/>
            <person name="Murakami K."/>
            <person name="Yasuda T."/>
            <person name="Iwayanagi T."/>
            <person name="Wagatsuma M."/>
            <person name="Shiratori A."/>
            <person name="Sudo H."/>
            <person name="Hosoiri T."/>
            <person name="Kaku Y."/>
            <person name="Kodaira H."/>
            <person name="Kondo H."/>
            <person name="Sugawara M."/>
            <person name="Takahashi M."/>
            <person name="Kanda K."/>
            <person name="Yokoi T."/>
            <person name="Furuya T."/>
            <person name="Kikkawa E."/>
            <person name="Omura Y."/>
            <person name="Abe K."/>
            <person name="Kamihara K."/>
            <person name="Katsuta N."/>
            <person name="Sato K."/>
            <person name="Tanikawa M."/>
            <person name="Yamazaki M."/>
            <person name="Ninomiya K."/>
            <person name="Ishibashi T."/>
            <person name="Yamashita H."/>
            <person name="Murakawa K."/>
            <person name="Fujimori K."/>
            <person name="Tanai H."/>
            <person name="Kimata M."/>
            <person name="Watanabe M."/>
            <person name="Hiraoka S."/>
            <person name="Chiba Y."/>
            <person name="Ishida S."/>
            <person name="Ono Y."/>
            <person name="Takiguchi S."/>
            <person name="Watanabe S."/>
            <person name="Yosida M."/>
            <person name="Hotuta T."/>
            <person name="Kusano J."/>
            <person name="Kanehori K."/>
            <person name="Takahashi-Fujii A."/>
            <person name="Hara H."/>
            <person name="Tanase T.-O."/>
            <person name="Nomura Y."/>
            <person name="Togiya S."/>
            <person name="Komai F."/>
            <person name="Hara R."/>
            <person name="Takeuchi K."/>
            <person name="Arita M."/>
            <person name="Imose N."/>
            <person name="Musashino K."/>
            <person name="Yuuki H."/>
            <person name="Oshima A."/>
            <person name="Sasaki N."/>
            <person name="Aotsuka S."/>
            <person name="Yoshikawa Y."/>
            <person name="Matsunawa H."/>
            <person name="Ichihara T."/>
            <person name="Shiohata N."/>
            <person name="Sano S."/>
            <person name="Moriya S."/>
            <person name="Momiyama H."/>
            <person name="Satoh N."/>
            <person name="Takami S."/>
            <person name="Terashima Y."/>
            <person name="Suzuki O."/>
            <person name="Nakagawa S."/>
            <person name="Senoh A."/>
            <person name="Mizoguchi H."/>
            <person name="Goto Y."/>
            <person name="Shimizu F."/>
            <person name="Wakebe H."/>
            <person name="Hishigaki H."/>
            <person name="Watanabe T."/>
            <person name="Sugiyama A."/>
            <person name="Takemoto M."/>
            <person name="Kawakami B."/>
            <person name="Yamazaki M."/>
            <person name="Watanabe K."/>
            <person name="Kumagai A."/>
            <person name="Itakura S."/>
            <person name="Fukuzumi Y."/>
            <person name="Fujimori Y."/>
            <person name="Komiyama M."/>
            <person name="Tashiro H."/>
            <person name="Tanigami A."/>
            <person name="Fujiwara T."/>
            <person name="Ono T."/>
            <person name="Yamada K."/>
            <person name="Fujii Y."/>
            <person name="Ozaki K."/>
            <person name="Hirao M."/>
            <person name="Ohmori Y."/>
            <person name="Kawabata A."/>
            <person name="Hikiji T."/>
            <person name="Kobatake N."/>
            <person name="Inagaki H."/>
            <person name="Ikema Y."/>
            <person name="Okamoto S."/>
            <person name="Okitani R."/>
            <person name="Kawakami T."/>
            <person name="Noguchi S."/>
            <person name="Itoh T."/>
            <person name="Shigeta K."/>
            <person name="Senba T."/>
            <person name="Matsumura K."/>
            <person name="Nakajima Y."/>
            <person name="Mizuno T."/>
            <person name="Morinaga M."/>
            <person name="Sasaki M."/>
            <person name="Togashi T."/>
            <person name="Oyama M."/>
            <person name="Hata H."/>
            <person name="Watanabe M."/>
            <person name="Komatsu T."/>
            <person name="Mizushima-Sugano J."/>
            <person name="Satoh T."/>
            <person name="Shirai Y."/>
            <person name="Takahashi Y."/>
            <person name="Nakagawa K."/>
            <person name="Okumura K."/>
            <person name="Nagase T."/>
            <person name="Nomura N."/>
            <person name="Kikuchi H."/>
            <person name="Masuho Y."/>
            <person name="Yamashita R."/>
            <person name="Nakai K."/>
            <person name="Yada T."/>
            <person name="Nakamura Y."/>
            <person name="Ohara O."/>
            <person name="Isogai T."/>
            <person name="Sugano S."/>
        </authorList>
    </citation>
    <scope>NUCLEOTIDE SEQUENCE [LARGE SCALE MRNA]</scope>
    <source>
        <tissue>Lung</tissue>
        <tissue>Testis</tissue>
    </source>
</reference>
<reference key="3">
    <citation type="journal article" date="2004" name="Nature">
        <title>DNA sequence and analysis of human chromosome 9.</title>
        <authorList>
            <person name="Humphray S.J."/>
            <person name="Oliver K."/>
            <person name="Hunt A.R."/>
            <person name="Plumb R.W."/>
            <person name="Loveland J.E."/>
            <person name="Howe K.L."/>
            <person name="Andrews T.D."/>
            <person name="Searle S."/>
            <person name="Hunt S.E."/>
            <person name="Scott C.E."/>
            <person name="Jones M.C."/>
            <person name="Ainscough R."/>
            <person name="Almeida J.P."/>
            <person name="Ambrose K.D."/>
            <person name="Ashwell R.I.S."/>
            <person name="Babbage A.K."/>
            <person name="Babbage S."/>
            <person name="Bagguley C.L."/>
            <person name="Bailey J."/>
            <person name="Banerjee R."/>
            <person name="Barker D.J."/>
            <person name="Barlow K.F."/>
            <person name="Bates K."/>
            <person name="Beasley H."/>
            <person name="Beasley O."/>
            <person name="Bird C.P."/>
            <person name="Bray-Allen S."/>
            <person name="Brown A.J."/>
            <person name="Brown J.Y."/>
            <person name="Burford D."/>
            <person name="Burrill W."/>
            <person name="Burton J."/>
            <person name="Carder C."/>
            <person name="Carter N.P."/>
            <person name="Chapman J.C."/>
            <person name="Chen Y."/>
            <person name="Clarke G."/>
            <person name="Clark S.Y."/>
            <person name="Clee C.M."/>
            <person name="Clegg S."/>
            <person name="Collier R.E."/>
            <person name="Corby N."/>
            <person name="Crosier M."/>
            <person name="Cummings A.T."/>
            <person name="Davies J."/>
            <person name="Dhami P."/>
            <person name="Dunn M."/>
            <person name="Dutta I."/>
            <person name="Dyer L.W."/>
            <person name="Earthrowl M.E."/>
            <person name="Faulkner L."/>
            <person name="Fleming C.J."/>
            <person name="Frankish A."/>
            <person name="Frankland J.A."/>
            <person name="French L."/>
            <person name="Fricker D.G."/>
            <person name="Garner P."/>
            <person name="Garnett J."/>
            <person name="Ghori J."/>
            <person name="Gilbert J.G.R."/>
            <person name="Glison C."/>
            <person name="Grafham D.V."/>
            <person name="Gribble S."/>
            <person name="Griffiths C."/>
            <person name="Griffiths-Jones S."/>
            <person name="Grocock R."/>
            <person name="Guy J."/>
            <person name="Hall R.E."/>
            <person name="Hammond S."/>
            <person name="Harley J.L."/>
            <person name="Harrison E.S.I."/>
            <person name="Hart E.A."/>
            <person name="Heath P.D."/>
            <person name="Henderson C.D."/>
            <person name="Hopkins B.L."/>
            <person name="Howard P.J."/>
            <person name="Howden P.J."/>
            <person name="Huckle E."/>
            <person name="Johnson C."/>
            <person name="Johnson D."/>
            <person name="Joy A.A."/>
            <person name="Kay M."/>
            <person name="Keenan S."/>
            <person name="Kershaw J.K."/>
            <person name="Kimberley A.M."/>
            <person name="King A."/>
            <person name="Knights A."/>
            <person name="Laird G.K."/>
            <person name="Langford C."/>
            <person name="Lawlor S."/>
            <person name="Leongamornlert D.A."/>
            <person name="Leversha M."/>
            <person name="Lloyd C."/>
            <person name="Lloyd D.M."/>
            <person name="Lovell J."/>
            <person name="Martin S."/>
            <person name="Mashreghi-Mohammadi M."/>
            <person name="Matthews L."/>
            <person name="McLaren S."/>
            <person name="McLay K.E."/>
            <person name="McMurray A."/>
            <person name="Milne S."/>
            <person name="Nickerson T."/>
            <person name="Nisbett J."/>
            <person name="Nordsiek G."/>
            <person name="Pearce A.V."/>
            <person name="Peck A.I."/>
            <person name="Porter K.M."/>
            <person name="Pandian R."/>
            <person name="Pelan S."/>
            <person name="Phillimore B."/>
            <person name="Povey S."/>
            <person name="Ramsey Y."/>
            <person name="Rand V."/>
            <person name="Scharfe M."/>
            <person name="Sehra H.K."/>
            <person name="Shownkeen R."/>
            <person name="Sims S.K."/>
            <person name="Skuce C.D."/>
            <person name="Smith M."/>
            <person name="Steward C.A."/>
            <person name="Swarbreck D."/>
            <person name="Sycamore N."/>
            <person name="Tester J."/>
            <person name="Thorpe A."/>
            <person name="Tracey A."/>
            <person name="Tromans A."/>
            <person name="Thomas D.W."/>
            <person name="Wall M."/>
            <person name="Wallis J.M."/>
            <person name="West A.P."/>
            <person name="Whitehead S.L."/>
            <person name="Willey D.L."/>
            <person name="Williams S.A."/>
            <person name="Wilming L."/>
            <person name="Wray P.W."/>
            <person name="Young L."/>
            <person name="Ashurst J.L."/>
            <person name="Coulson A."/>
            <person name="Blocker H."/>
            <person name="Durbin R.M."/>
            <person name="Sulston J.E."/>
            <person name="Hubbard T."/>
            <person name="Jackson M.J."/>
            <person name="Bentley D.R."/>
            <person name="Beck S."/>
            <person name="Rogers J."/>
            <person name="Dunham I."/>
        </authorList>
    </citation>
    <scope>NUCLEOTIDE SEQUENCE [LARGE SCALE GENOMIC DNA]</scope>
</reference>
<reference key="4">
    <citation type="submission" date="2005-07" db="EMBL/GenBank/DDBJ databases">
        <authorList>
            <person name="Mural R.J."/>
            <person name="Istrail S."/>
            <person name="Sutton G."/>
            <person name="Florea L."/>
            <person name="Halpern A.L."/>
            <person name="Mobarry C.M."/>
            <person name="Lippert R."/>
            <person name="Walenz B."/>
            <person name="Shatkay H."/>
            <person name="Dew I."/>
            <person name="Miller J.R."/>
            <person name="Flanigan M.J."/>
            <person name="Edwards N.J."/>
            <person name="Bolanos R."/>
            <person name="Fasulo D."/>
            <person name="Halldorsson B.V."/>
            <person name="Hannenhalli S."/>
            <person name="Turner R."/>
            <person name="Yooseph S."/>
            <person name="Lu F."/>
            <person name="Nusskern D.R."/>
            <person name="Shue B.C."/>
            <person name="Zheng X.H."/>
            <person name="Zhong F."/>
            <person name="Delcher A.L."/>
            <person name="Huson D.H."/>
            <person name="Kravitz S.A."/>
            <person name="Mouchard L."/>
            <person name="Reinert K."/>
            <person name="Remington K.A."/>
            <person name="Clark A.G."/>
            <person name="Waterman M.S."/>
            <person name="Eichler E.E."/>
            <person name="Adams M.D."/>
            <person name="Hunkapiller M.W."/>
            <person name="Myers E.W."/>
            <person name="Venter J.C."/>
        </authorList>
    </citation>
    <scope>NUCLEOTIDE SEQUENCE [LARGE SCALE GENOMIC DNA]</scope>
</reference>
<reference key="5">
    <citation type="journal article" date="2004" name="Genome Res.">
        <title>The status, quality, and expansion of the NIH full-length cDNA project: the Mammalian Gene Collection (MGC).</title>
        <authorList>
            <consortium name="The MGC Project Team"/>
        </authorList>
    </citation>
    <scope>NUCLEOTIDE SEQUENCE [LARGE SCALE MRNA]</scope>
    <source>
        <tissue>Blood</tissue>
    </source>
</reference>
<reference key="6">
    <citation type="journal article" date="2017" name="J. Immunol.">
        <title>SLC46 Family Transporters Facilitate Cytosolic Innate Immune Recognition of Monomeric Peptidoglycans.</title>
        <authorList>
            <person name="Paik D."/>
            <person name="Monahan A."/>
            <person name="Caffrey D.R."/>
            <person name="Elling R."/>
            <person name="Goldman W.E."/>
            <person name="Silverman N."/>
        </authorList>
    </citation>
    <scope>FUNCTION</scope>
    <scope>TRANSPORTER ACTIVITY</scope>
    <scope>SUBCELLULAR LOCATION</scope>
</reference>
<reference key="7">
    <citation type="journal article" date="2021" name="ACS Cent. Sci.">
        <title>Human SLC46A2 Is the Dominant cGAMP Importer in Extracellular cGAMP-Sensing Macrophages and Monocytes.</title>
        <authorList>
            <person name="Cordova A.F."/>
            <person name="Ritchie C."/>
            <person name="Boehnert V."/>
            <person name="Li L."/>
        </authorList>
    </citation>
    <scope>FUNCTION</scope>
    <scope>TRANSPORTER ACTIVITY</scope>
    <scope>SUBCELLULAR LOCATION</scope>
    <scope>TISSUE SPECIFICITY</scope>
</reference>
<reference key="8">
    <citation type="journal article" date="2023" name="Immunity">
        <title>Methotrexate suppresses psoriatic skin inflammation by inhibiting muropeptide transporter SLC46A2 activity.</title>
        <authorList>
            <person name="Bharadwaj R."/>
            <person name="Lusi C.F."/>
            <person name="Mashayekh S."/>
            <person name="Nagar A."/>
            <person name="Subbarao M."/>
            <person name="Kane G.I."/>
            <person name="Wodzanowski K.A."/>
            <person name="Brown A.R."/>
            <person name="Okuda K."/>
            <person name="Monahan A."/>
            <person name="Paik D."/>
            <person name="Nandy A."/>
            <person name="Anonick M.V."/>
            <person name="Goldman W.E."/>
            <person name="Kanneganti T.D."/>
            <person name="Orzalli M.H."/>
            <person name="Grimes C.L."/>
            <person name="Atukorale P.U."/>
            <person name="Silverman N."/>
        </authorList>
    </citation>
    <scope>INDUCTION</scope>
</reference>
<organism>
    <name type="scientific">Homo sapiens</name>
    <name type="common">Human</name>
    <dbReference type="NCBI Taxonomy" id="9606"/>
    <lineage>
        <taxon>Eukaryota</taxon>
        <taxon>Metazoa</taxon>
        <taxon>Chordata</taxon>
        <taxon>Craniata</taxon>
        <taxon>Vertebrata</taxon>
        <taxon>Euteleostomi</taxon>
        <taxon>Mammalia</taxon>
        <taxon>Eutheria</taxon>
        <taxon>Euarchontoglires</taxon>
        <taxon>Primates</taxon>
        <taxon>Haplorrhini</taxon>
        <taxon>Catarrhini</taxon>
        <taxon>Hominidae</taxon>
        <taxon>Homo</taxon>
    </lineage>
</organism>